<protein>
    <recommendedName>
        <fullName>Plasma membrane ATPase 1</fullName>
        <ecNumber>7.1.2.1</ecNumber>
    </recommendedName>
    <alternativeName>
        <fullName>Proton pump 1</fullName>
    </alternativeName>
</protein>
<dbReference type="EC" id="7.1.2.1"/>
<dbReference type="EMBL" id="X03534">
    <property type="protein sequence ID" value="CAA27237.1"/>
    <property type="molecule type" value="Genomic_DNA"/>
</dbReference>
<dbReference type="EMBL" id="Z72530">
    <property type="protein sequence ID" value="CAA96708.1"/>
    <property type="molecule type" value="Genomic_DNA"/>
</dbReference>
<dbReference type="EMBL" id="BK006941">
    <property type="protein sequence ID" value="DAA08090.1"/>
    <property type="molecule type" value="Genomic_DNA"/>
</dbReference>
<dbReference type="PIR" id="S64010">
    <property type="entry name" value="PXBY1P"/>
</dbReference>
<dbReference type="RefSeq" id="NP_011507.1">
    <property type="nucleotide sequence ID" value="NM_001180873.1"/>
</dbReference>
<dbReference type="PDB" id="7VH5">
    <property type="method" value="EM"/>
    <property type="resolution" value="3.20 A"/>
    <property type="chains" value="A/B/C/D/E/F=1-918"/>
</dbReference>
<dbReference type="PDB" id="7VH6">
    <property type="method" value="EM"/>
    <property type="resolution" value="3.80 A"/>
    <property type="chains" value="A/B/C/D/E/F=1-918"/>
</dbReference>
<dbReference type="PDBsum" id="7VH5"/>
<dbReference type="PDBsum" id="7VH6"/>
<dbReference type="EMDB" id="EMD-31986"/>
<dbReference type="EMDB" id="EMD-31988"/>
<dbReference type="SMR" id="P05030"/>
<dbReference type="BioGRID" id="33238">
    <property type="interactions" value="841"/>
</dbReference>
<dbReference type="DIP" id="DIP-2537N"/>
<dbReference type="FunCoup" id="P05030">
    <property type="interactions" value="557"/>
</dbReference>
<dbReference type="IntAct" id="P05030">
    <property type="interactions" value="42"/>
</dbReference>
<dbReference type="MINT" id="P05030"/>
<dbReference type="STRING" id="4932.YGL008C"/>
<dbReference type="ChEMBL" id="CHEMBL5291521"/>
<dbReference type="TCDB" id="3.A.3.3.6">
    <property type="family name" value="the p-type atpase (p-atpase) superfamily"/>
</dbReference>
<dbReference type="CarbonylDB" id="P05030"/>
<dbReference type="iPTMnet" id="P05030"/>
<dbReference type="PaxDb" id="4932-YGL008C"/>
<dbReference type="PeptideAtlas" id="P05030"/>
<dbReference type="EnsemblFungi" id="YGL008C_mRNA">
    <property type="protein sequence ID" value="YGL008C"/>
    <property type="gene ID" value="YGL008C"/>
</dbReference>
<dbReference type="GeneID" id="852876"/>
<dbReference type="KEGG" id="sce:YGL008C"/>
<dbReference type="AGR" id="SGD:S000002976"/>
<dbReference type="SGD" id="S000002976">
    <property type="gene designation" value="PMA1"/>
</dbReference>
<dbReference type="VEuPathDB" id="FungiDB:YGL008C"/>
<dbReference type="eggNOG" id="KOG0205">
    <property type="taxonomic scope" value="Eukaryota"/>
</dbReference>
<dbReference type="GeneTree" id="ENSGT00940000176570"/>
<dbReference type="HOGENOM" id="CLU_002360_6_0_1"/>
<dbReference type="InParanoid" id="P05030"/>
<dbReference type="OMA" id="VIEFHPF"/>
<dbReference type="OrthoDB" id="116380at2759"/>
<dbReference type="BioCyc" id="MetaCyc:G3O-30531-MONOMER"/>
<dbReference type="BioCyc" id="YEAST:G3O-30531-MONOMER"/>
<dbReference type="BRENDA" id="7.1.2.1">
    <property type="organism ID" value="984"/>
</dbReference>
<dbReference type="SABIO-RK" id="P05030"/>
<dbReference type="BioGRID-ORCS" id="852876">
    <property type="hits" value="3 hits in 10 CRISPR screens"/>
</dbReference>
<dbReference type="PRO" id="PR:P05030"/>
<dbReference type="Proteomes" id="UP000002311">
    <property type="component" value="Chromosome VII"/>
</dbReference>
<dbReference type="RNAct" id="P05030">
    <property type="molecule type" value="protein"/>
</dbReference>
<dbReference type="GO" id="GO:0005829">
    <property type="term" value="C:cytosol"/>
    <property type="evidence" value="ECO:0007005"/>
    <property type="project" value="SGD"/>
</dbReference>
<dbReference type="GO" id="GO:0032126">
    <property type="term" value="C:eisosome"/>
    <property type="evidence" value="ECO:0000314"/>
    <property type="project" value="SGD"/>
</dbReference>
<dbReference type="GO" id="GO:0045121">
    <property type="term" value="C:membrane raft"/>
    <property type="evidence" value="ECO:0000314"/>
    <property type="project" value="SGD"/>
</dbReference>
<dbReference type="GO" id="GO:0005739">
    <property type="term" value="C:mitochondrion"/>
    <property type="evidence" value="ECO:0007005"/>
    <property type="project" value="SGD"/>
</dbReference>
<dbReference type="GO" id="GO:0005886">
    <property type="term" value="C:plasma membrane"/>
    <property type="evidence" value="ECO:0000314"/>
    <property type="project" value="SGD"/>
</dbReference>
<dbReference type="GO" id="GO:0005524">
    <property type="term" value="F:ATP binding"/>
    <property type="evidence" value="ECO:0007669"/>
    <property type="project" value="UniProtKB-KW"/>
</dbReference>
<dbReference type="GO" id="GO:0016887">
    <property type="term" value="F:ATP hydrolysis activity"/>
    <property type="evidence" value="ECO:0007669"/>
    <property type="project" value="InterPro"/>
</dbReference>
<dbReference type="GO" id="GO:0046872">
    <property type="term" value="F:metal ion binding"/>
    <property type="evidence" value="ECO:0007669"/>
    <property type="project" value="UniProtKB-KW"/>
</dbReference>
<dbReference type="GO" id="GO:0008553">
    <property type="term" value="F:P-type proton-exporting transporter activity"/>
    <property type="evidence" value="ECO:0000314"/>
    <property type="project" value="SGD"/>
</dbReference>
<dbReference type="GO" id="GO:1904263">
    <property type="term" value="P:positive regulation of TORC1 signaling"/>
    <property type="evidence" value="ECO:0000315"/>
    <property type="project" value="SGD"/>
</dbReference>
<dbReference type="GO" id="GO:1902906">
    <property type="term" value="P:proteasome storage granule assembly"/>
    <property type="evidence" value="ECO:0000315"/>
    <property type="project" value="SGD"/>
</dbReference>
<dbReference type="GO" id="GO:0120029">
    <property type="term" value="P:proton export across plasma membrane"/>
    <property type="evidence" value="ECO:0007669"/>
    <property type="project" value="InterPro"/>
</dbReference>
<dbReference type="GO" id="GO:1902600">
    <property type="term" value="P:proton transmembrane transport"/>
    <property type="evidence" value="ECO:0000314"/>
    <property type="project" value="SGD"/>
</dbReference>
<dbReference type="GO" id="GO:0051453">
    <property type="term" value="P:regulation of intracellular pH"/>
    <property type="evidence" value="ECO:0000318"/>
    <property type="project" value="GO_Central"/>
</dbReference>
<dbReference type="GO" id="GO:0055085">
    <property type="term" value="P:transmembrane transport"/>
    <property type="evidence" value="ECO:0000314"/>
    <property type="project" value="SGD"/>
</dbReference>
<dbReference type="CDD" id="cd02076">
    <property type="entry name" value="P-type_ATPase_H"/>
    <property type="match status" value="1"/>
</dbReference>
<dbReference type="FunFam" id="2.70.150.10:FF:000011">
    <property type="entry name" value="Plasma membrane ATPase"/>
    <property type="match status" value="1"/>
</dbReference>
<dbReference type="FunFam" id="3.40.1110.10:FF:000005">
    <property type="entry name" value="Plasma membrane ATPase"/>
    <property type="match status" value="1"/>
</dbReference>
<dbReference type="FunFam" id="3.40.50.1000:FF:000008">
    <property type="entry name" value="Plasma membrane ATPase"/>
    <property type="match status" value="1"/>
</dbReference>
<dbReference type="Gene3D" id="3.40.1110.10">
    <property type="entry name" value="Calcium-transporting ATPase, cytoplasmic domain N"/>
    <property type="match status" value="1"/>
</dbReference>
<dbReference type="Gene3D" id="2.70.150.10">
    <property type="entry name" value="Calcium-transporting ATPase, cytoplasmic transduction domain A"/>
    <property type="match status" value="1"/>
</dbReference>
<dbReference type="Gene3D" id="1.20.1110.10">
    <property type="entry name" value="Calcium-transporting ATPase, transmembrane domain"/>
    <property type="match status" value="1"/>
</dbReference>
<dbReference type="Gene3D" id="3.40.50.1000">
    <property type="entry name" value="HAD superfamily/HAD-like"/>
    <property type="match status" value="1"/>
</dbReference>
<dbReference type="InterPro" id="IPR004014">
    <property type="entry name" value="ATPase_P-typ_cation-transptr_N"/>
</dbReference>
<dbReference type="InterPro" id="IPR023299">
    <property type="entry name" value="ATPase_P-typ_cyto_dom_N"/>
</dbReference>
<dbReference type="InterPro" id="IPR018303">
    <property type="entry name" value="ATPase_P-typ_P_site"/>
</dbReference>
<dbReference type="InterPro" id="IPR023298">
    <property type="entry name" value="ATPase_P-typ_TM_dom_sf"/>
</dbReference>
<dbReference type="InterPro" id="IPR008250">
    <property type="entry name" value="ATPase_P-typ_transduc_dom_A_sf"/>
</dbReference>
<dbReference type="InterPro" id="IPR036412">
    <property type="entry name" value="HAD-like_sf"/>
</dbReference>
<dbReference type="InterPro" id="IPR023214">
    <property type="entry name" value="HAD_sf"/>
</dbReference>
<dbReference type="InterPro" id="IPR006534">
    <property type="entry name" value="P-type_ATPase_IIIA"/>
</dbReference>
<dbReference type="InterPro" id="IPR001757">
    <property type="entry name" value="P_typ_ATPase"/>
</dbReference>
<dbReference type="InterPro" id="IPR044492">
    <property type="entry name" value="P_typ_ATPase_HD_dom"/>
</dbReference>
<dbReference type="NCBIfam" id="TIGR01647">
    <property type="entry name" value="ATPase-IIIA_H"/>
    <property type="match status" value="1"/>
</dbReference>
<dbReference type="NCBIfam" id="TIGR01494">
    <property type="entry name" value="ATPase_P-type"/>
    <property type="match status" value="3"/>
</dbReference>
<dbReference type="PANTHER" id="PTHR42861">
    <property type="entry name" value="CALCIUM-TRANSPORTING ATPASE"/>
    <property type="match status" value="1"/>
</dbReference>
<dbReference type="Pfam" id="PF00690">
    <property type="entry name" value="Cation_ATPase_N"/>
    <property type="match status" value="1"/>
</dbReference>
<dbReference type="Pfam" id="PF00122">
    <property type="entry name" value="E1-E2_ATPase"/>
    <property type="match status" value="1"/>
</dbReference>
<dbReference type="Pfam" id="PF00702">
    <property type="entry name" value="Hydrolase"/>
    <property type="match status" value="1"/>
</dbReference>
<dbReference type="PRINTS" id="PR00119">
    <property type="entry name" value="CATATPASE"/>
</dbReference>
<dbReference type="PRINTS" id="PR00120">
    <property type="entry name" value="HATPASE"/>
</dbReference>
<dbReference type="SFLD" id="SFLDG00002">
    <property type="entry name" value="C1.7:_P-type_atpase_like"/>
    <property type="match status" value="1"/>
</dbReference>
<dbReference type="SFLD" id="SFLDF00027">
    <property type="entry name" value="p-type_atpase"/>
    <property type="match status" value="1"/>
</dbReference>
<dbReference type="SMART" id="SM00831">
    <property type="entry name" value="Cation_ATPase_N"/>
    <property type="match status" value="1"/>
</dbReference>
<dbReference type="SUPFAM" id="SSF81653">
    <property type="entry name" value="Calcium ATPase, transduction domain A"/>
    <property type="match status" value="1"/>
</dbReference>
<dbReference type="SUPFAM" id="SSF81665">
    <property type="entry name" value="Calcium ATPase, transmembrane domain M"/>
    <property type="match status" value="1"/>
</dbReference>
<dbReference type="SUPFAM" id="SSF56784">
    <property type="entry name" value="HAD-like"/>
    <property type="match status" value="1"/>
</dbReference>
<dbReference type="PROSITE" id="PS00154">
    <property type="entry name" value="ATPASE_E1_E2"/>
    <property type="match status" value="1"/>
</dbReference>
<name>PMA1_YEAST</name>
<feature type="chain" id="PRO_0000046271" description="Plasma membrane ATPase 1">
    <location>
        <begin position="1"/>
        <end position="918"/>
    </location>
</feature>
<feature type="topological domain" description="Cytoplasmic" evidence="2">
    <location>
        <begin position="1"/>
        <end position="115"/>
    </location>
</feature>
<feature type="transmembrane region" description="Helical; Name=1" evidence="2">
    <location>
        <begin position="116"/>
        <end position="136"/>
    </location>
</feature>
<feature type="topological domain" description="Extracellular" evidence="2">
    <location>
        <begin position="137"/>
        <end position="140"/>
    </location>
</feature>
<feature type="transmembrane region" description="Helical; Name=2" evidence="2">
    <location>
        <begin position="141"/>
        <end position="160"/>
    </location>
</feature>
<feature type="topological domain" description="Cytoplasmic" evidence="2">
    <location>
        <begin position="161"/>
        <end position="291"/>
    </location>
</feature>
<feature type="transmembrane region" description="Helical; Name=3" evidence="2">
    <location>
        <begin position="292"/>
        <end position="313"/>
    </location>
</feature>
<feature type="topological domain" description="Extracellular" evidence="2">
    <location>
        <begin position="314"/>
        <end position="325"/>
    </location>
</feature>
<feature type="transmembrane region" description="Helical; Name=4" evidence="2">
    <location>
        <begin position="326"/>
        <end position="347"/>
    </location>
</feature>
<feature type="topological domain" description="Cytoplasmic" evidence="2">
    <location>
        <begin position="348"/>
        <end position="719"/>
    </location>
</feature>
<feature type="transmembrane region" description="Helical; Name=5" evidence="2">
    <location>
        <begin position="720"/>
        <end position="738"/>
    </location>
</feature>
<feature type="topological domain" description="Extracellular" evidence="2">
    <location>
        <begin position="739"/>
        <end position="754"/>
    </location>
</feature>
<feature type="transmembrane region" description="Helical; Name=6" evidence="2">
    <location>
        <begin position="755"/>
        <end position="774"/>
    </location>
</feature>
<feature type="topological domain" description="Cytoplasmic" evidence="2">
    <location>
        <begin position="775"/>
        <end position="824"/>
    </location>
</feature>
<feature type="transmembrane region" description="Helical; Name=7" evidence="2">
    <location>
        <begin position="825"/>
        <end position="845"/>
    </location>
</feature>
<feature type="topological domain" description="Extracellular" evidence="2">
    <location>
        <begin position="846"/>
        <end position="857"/>
    </location>
</feature>
<feature type="transmembrane region" description="Helical; Name=8" evidence="2">
    <location>
        <begin position="858"/>
        <end position="874"/>
    </location>
</feature>
<feature type="topological domain" description="Cytoplasmic" evidence="2">
    <location>
        <begin position="875"/>
        <end position="918"/>
    </location>
</feature>
<feature type="region of interest" description="Disordered" evidence="3">
    <location>
        <begin position="1"/>
        <end position="84"/>
    </location>
</feature>
<feature type="compositionally biased region" description="Low complexity" evidence="3">
    <location>
        <begin position="1"/>
        <end position="18"/>
    </location>
</feature>
<feature type="compositionally biased region" description="Acidic residues" evidence="3">
    <location>
        <begin position="33"/>
        <end position="47"/>
    </location>
</feature>
<feature type="active site" description="4-aspartylphosphate intermediate" evidence="1">
    <location>
        <position position="378"/>
    </location>
</feature>
<feature type="binding site" evidence="1">
    <location>
        <position position="634"/>
    </location>
    <ligand>
        <name>Mg(2+)</name>
        <dbReference type="ChEBI" id="CHEBI:18420"/>
    </ligand>
</feature>
<feature type="binding site" evidence="1">
    <location>
        <position position="638"/>
    </location>
    <ligand>
        <name>Mg(2+)</name>
        <dbReference type="ChEBI" id="CHEBI:18420"/>
    </ligand>
</feature>
<feature type="modified residue" description="Phosphoserine" evidence="11">
    <location>
        <position position="61"/>
    </location>
</feature>
<feature type="modified residue" description="Phosphothreonine" evidence="12">
    <location>
        <position position="175"/>
    </location>
</feature>
<feature type="modified residue" description="Phosphoserine" evidence="10 12">
    <location>
        <position position="911"/>
    </location>
</feature>
<feature type="modified residue" description="Phosphothreonine" evidence="10 12">
    <location>
        <position position="912"/>
    </location>
</feature>
<feature type="modified residue" description="Phosphothreonine" evidence="10">
    <location>
        <position position="918"/>
    </location>
</feature>
<feature type="cross-link" description="Glycyl lysine isopeptide (Lys-Gly) (interchain with G-Cter in ubiquitin)" evidence="13">
    <location>
        <position position="252"/>
    </location>
</feature>
<feature type="cross-link" description="Glycyl lysine isopeptide (Lys-Gly) (interchain with G-Cter in ubiquitin)" evidence="4">
    <location>
        <position position="555"/>
    </location>
</feature>
<feature type="mutagenesis site" description="Normal activity." evidence="7">
    <original>E</original>
    <variation>L</variation>
    <variation>Q</variation>
    <location>
        <position position="129"/>
    </location>
</feature>
<feature type="mutagenesis site" description="Activity reduced to 23%." evidence="7">
    <original>D</original>
    <variation>N</variation>
    <location>
        <position position="200"/>
    </location>
</feature>
<feature type="mutagenesis site" description="Activity reduced to 33%." evidence="7">
    <original>E</original>
    <variation>Q</variation>
    <location>
        <position position="233"/>
    </location>
</feature>
<feature type="mutagenesis site" description="Normal activity." evidence="7">
    <original>R</original>
    <variation>T</variation>
    <location>
        <position position="271"/>
    </location>
</feature>
<feature type="mutagenesis site" description="Activity reduced to 53%." evidence="7">
    <original>P</original>
    <variation>A</variation>
    <location>
        <position position="335"/>
    </location>
</feature>
<feature type="mutagenesis site" description="Activity reduced to 67%." evidence="7">
    <original>D</original>
    <variation>E</variation>
    <location>
        <position position="378"/>
    </location>
</feature>
<feature type="mutagenesis site" description="Activity reduced to 73%." evidence="7">
    <original>D</original>
    <variation>N</variation>
    <location>
        <position position="378"/>
    </location>
</feature>
<feature type="mutagenesis site" description="Activity reduced to 49%." evidence="7">
    <original>D</original>
    <variation>T</variation>
    <location>
        <position position="378"/>
    </location>
</feature>
<feature type="mutagenesis site" description="Activity reduced to 19%." evidence="7">
    <original>K</original>
    <variation>Q</variation>
    <location>
        <position position="474"/>
    </location>
</feature>
<feature type="mutagenesis site" description="Activity reduced to 37%." evidence="7">
    <original>D</original>
    <variation>N</variation>
    <location>
        <position position="534"/>
    </location>
</feature>
<feature type="mutagenesis site" description="Activity reduced to 24%." evidence="7">
    <original>D</original>
    <variation>N</variation>
    <location>
        <position position="560"/>
    </location>
</feature>
<feature type="mutagenesis site" description="Activity reduced to 24%." evidence="7">
    <original>D</original>
    <variation>N</variation>
    <location>
        <position position="638"/>
    </location>
</feature>
<feature type="mutagenesis site" description="Normal activity." evidence="7">
    <original>N</original>
    <variation>D</variation>
    <location>
        <position position="848"/>
    </location>
</feature>
<feature type="helix" evidence="14">
    <location>
        <begin position="111"/>
        <end position="120"/>
    </location>
</feature>
<feature type="helix" evidence="14">
    <location>
        <begin position="123"/>
        <end position="137"/>
    </location>
</feature>
<feature type="helix" evidence="14">
    <location>
        <begin position="141"/>
        <end position="173"/>
    </location>
</feature>
<feature type="strand" evidence="14">
    <location>
        <begin position="179"/>
        <end position="184"/>
    </location>
</feature>
<feature type="strand" evidence="14">
    <location>
        <begin position="187"/>
        <end position="192"/>
    </location>
</feature>
<feature type="helix" evidence="14">
    <location>
        <begin position="193"/>
        <end position="195"/>
    </location>
</feature>
<feature type="strand" evidence="14">
    <location>
        <begin position="198"/>
        <end position="204"/>
    </location>
</feature>
<feature type="strand" evidence="14">
    <location>
        <begin position="214"/>
        <end position="216"/>
    </location>
</feature>
<feature type="strand" evidence="14">
    <location>
        <begin position="223"/>
        <end position="226"/>
    </location>
</feature>
<feature type="turn" evidence="14">
    <location>
        <begin position="229"/>
        <end position="231"/>
    </location>
</feature>
<feature type="strand" evidence="14">
    <location>
        <begin position="237"/>
        <end position="239"/>
    </location>
</feature>
<feature type="strand" evidence="14">
    <location>
        <begin position="250"/>
        <end position="253"/>
    </location>
</feature>
<feature type="strand" evidence="14">
    <location>
        <begin position="256"/>
        <end position="260"/>
    </location>
</feature>
<feature type="helix" evidence="14">
    <location>
        <begin position="268"/>
        <end position="279"/>
    </location>
</feature>
<feature type="helix" evidence="14">
    <location>
        <begin position="285"/>
        <end position="314"/>
    </location>
</feature>
<feature type="helix" evidence="14">
    <location>
        <begin position="319"/>
        <end position="333"/>
    </location>
</feature>
<feature type="helix" evidence="14">
    <location>
        <begin position="338"/>
        <end position="355"/>
    </location>
</feature>
<feature type="strand" evidence="14">
    <location>
        <begin position="358"/>
        <end position="362"/>
    </location>
</feature>
<feature type="helix" evidence="14">
    <location>
        <begin position="364"/>
        <end position="370"/>
    </location>
</feature>
<feature type="strand" evidence="14">
    <location>
        <begin position="374"/>
        <end position="378"/>
    </location>
</feature>
<feature type="helix" evidence="14">
    <location>
        <begin position="379"/>
        <end position="383"/>
    </location>
</feature>
<feature type="helix" evidence="14">
    <location>
        <begin position="401"/>
        <end position="410"/>
    </location>
</feature>
<feature type="helix" evidence="14">
    <location>
        <begin position="416"/>
        <end position="418"/>
    </location>
</feature>
<feature type="helix" evidence="14">
    <location>
        <begin position="421"/>
        <end position="427"/>
    </location>
</feature>
<feature type="turn" evidence="14">
    <location>
        <begin position="435"/>
        <end position="440"/>
    </location>
</feature>
<feature type="strand" evidence="14">
    <location>
        <begin position="445"/>
        <end position="449"/>
    </location>
</feature>
<feature type="turn" evidence="14">
    <location>
        <begin position="453"/>
        <end position="455"/>
    </location>
</feature>
<feature type="strand" evidence="14">
    <location>
        <begin position="457"/>
        <end position="463"/>
    </location>
</feature>
<feature type="strand" evidence="14">
    <location>
        <begin position="469"/>
        <end position="475"/>
    </location>
</feature>
<feature type="helix" evidence="14">
    <location>
        <begin position="477"/>
        <end position="481"/>
    </location>
</feature>
<feature type="strand" evidence="14">
    <location>
        <begin position="487"/>
        <end position="490"/>
    </location>
</feature>
<feature type="helix" evidence="14">
    <location>
        <begin position="491"/>
        <end position="507"/>
    </location>
</feature>
<feature type="strand" evidence="14">
    <location>
        <begin position="511"/>
        <end position="518"/>
    </location>
</feature>
<feature type="strand" evidence="14">
    <location>
        <begin position="520"/>
        <end position="522"/>
    </location>
</feature>
<feature type="strand" evidence="14">
    <location>
        <begin position="524"/>
        <end position="533"/>
    </location>
</feature>
<feature type="helix" evidence="14">
    <location>
        <begin position="540"/>
        <end position="549"/>
    </location>
</feature>
<feature type="strand" evidence="14">
    <location>
        <begin position="553"/>
        <end position="557"/>
    </location>
</feature>
<feature type="helix" evidence="14">
    <location>
        <begin position="562"/>
        <end position="572"/>
    </location>
</feature>
<feature type="strand" evidence="14">
    <location>
        <begin position="578"/>
        <end position="580"/>
    </location>
</feature>
<feature type="helix" evidence="14">
    <location>
        <begin position="581"/>
        <end position="584"/>
    </location>
</feature>
<feature type="strand" evidence="14">
    <location>
        <begin position="585"/>
        <end position="588"/>
    </location>
</feature>
<feature type="helix" evidence="14">
    <location>
        <begin position="594"/>
        <end position="603"/>
    </location>
</feature>
<feature type="strand" evidence="14">
    <location>
        <begin position="605"/>
        <end position="609"/>
    </location>
</feature>
<feature type="helix" evidence="14">
    <location>
        <begin position="612"/>
        <end position="624"/>
    </location>
</feature>
<feature type="strand" evidence="14">
    <location>
        <begin position="629"/>
        <end position="633"/>
    </location>
</feature>
<feature type="helix" evidence="14">
    <location>
        <begin position="639"/>
        <end position="644"/>
    </location>
</feature>
<feature type="strand" evidence="14">
    <location>
        <begin position="645"/>
        <end position="650"/>
    </location>
</feature>
<feature type="helix" evidence="14">
    <location>
        <begin position="656"/>
        <end position="661"/>
    </location>
</feature>
<feature type="strand" evidence="14">
    <location>
        <begin position="663"/>
        <end position="668"/>
    </location>
</feature>
<feature type="helix" evidence="14">
    <location>
        <begin position="671"/>
        <end position="713"/>
    </location>
</feature>
<feature type="helix" evidence="14">
    <location>
        <begin position="719"/>
        <end position="736"/>
    </location>
</feature>
<feature type="helix" evidence="14">
    <location>
        <begin position="752"/>
        <end position="776"/>
    </location>
</feature>
<feature type="helix" evidence="14">
    <location>
        <begin position="791"/>
        <end position="804"/>
    </location>
</feature>
<feature type="helix" evidence="14">
    <location>
        <begin position="806"/>
        <end position="810"/>
    </location>
</feature>
<feature type="strand" evidence="14">
    <location>
        <begin position="812"/>
        <end position="814"/>
    </location>
</feature>
<feature type="turn" evidence="14">
    <location>
        <begin position="816"/>
        <end position="818"/>
    </location>
</feature>
<feature type="helix" evidence="14">
    <location>
        <begin position="823"/>
        <end position="842"/>
    </location>
</feature>
<feature type="turn" evidence="14">
    <location>
        <begin position="843"/>
        <end position="845"/>
    </location>
</feature>
<feature type="strand" evidence="14">
    <location>
        <begin position="846"/>
        <end position="848"/>
    </location>
</feature>
<feature type="helix" evidence="14">
    <location>
        <begin position="852"/>
        <end position="877"/>
    </location>
</feature>
<feature type="helix" evidence="14">
    <location>
        <begin position="880"/>
        <end position="887"/>
    </location>
</feature>
<feature type="helix" evidence="14">
    <location>
        <begin position="897"/>
        <end position="916"/>
    </location>
</feature>
<organism>
    <name type="scientific">Saccharomyces cerevisiae (strain ATCC 204508 / S288c)</name>
    <name type="common">Baker's yeast</name>
    <dbReference type="NCBI Taxonomy" id="559292"/>
    <lineage>
        <taxon>Eukaryota</taxon>
        <taxon>Fungi</taxon>
        <taxon>Dikarya</taxon>
        <taxon>Ascomycota</taxon>
        <taxon>Saccharomycotina</taxon>
        <taxon>Saccharomycetes</taxon>
        <taxon>Saccharomycetales</taxon>
        <taxon>Saccharomycetaceae</taxon>
        <taxon>Saccharomyces</taxon>
    </lineage>
</organism>
<evidence type="ECO:0000250" key="1"/>
<evidence type="ECO:0000255" key="2"/>
<evidence type="ECO:0000256" key="3">
    <source>
        <dbReference type="SAM" id="MobiDB-lite"/>
    </source>
</evidence>
<evidence type="ECO:0000269" key="4">
    <source>
    </source>
</evidence>
<evidence type="ECO:0000269" key="5">
    <source>
    </source>
</evidence>
<evidence type="ECO:0000269" key="6">
    <source>
    </source>
</evidence>
<evidence type="ECO:0000269" key="7">
    <source>
    </source>
</evidence>
<evidence type="ECO:0000305" key="8"/>
<evidence type="ECO:0000305" key="9">
    <source>
    </source>
</evidence>
<evidence type="ECO:0007744" key="10">
    <source>
    </source>
</evidence>
<evidence type="ECO:0007744" key="11">
    <source>
    </source>
</evidence>
<evidence type="ECO:0007744" key="12">
    <source>
    </source>
</evidence>
<evidence type="ECO:0007744" key="13">
    <source>
    </source>
</evidence>
<evidence type="ECO:0007829" key="14">
    <source>
        <dbReference type="PDB" id="7VH5"/>
    </source>
</evidence>
<keyword id="KW-0002">3D-structure</keyword>
<keyword id="KW-0034">Amyloid</keyword>
<keyword id="KW-0067">ATP-binding</keyword>
<keyword id="KW-1003">Cell membrane</keyword>
<keyword id="KW-0903">Direct protein sequencing</keyword>
<keyword id="KW-0375">Hydrogen ion transport</keyword>
<keyword id="KW-0406">Ion transport</keyword>
<keyword id="KW-1017">Isopeptide bond</keyword>
<keyword id="KW-0460">Magnesium</keyword>
<keyword id="KW-0472">Membrane</keyword>
<keyword id="KW-0479">Metal-binding</keyword>
<keyword id="KW-0547">Nucleotide-binding</keyword>
<keyword id="KW-0597">Phosphoprotein</keyword>
<keyword id="KW-0640">Prion</keyword>
<keyword id="KW-1185">Reference proteome</keyword>
<keyword id="KW-1278">Translocase</keyword>
<keyword id="KW-0812">Transmembrane</keyword>
<keyword id="KW-1133">Transmembrane helix</keyword>
<keyword id="KW-0813">Transport</keyword>
<keyword id="KW-0832">Ubl conjugation</keyword>
<sequence length="918" mass="99619">MTDTSSSSSSSSASSVSAHQPTQEKPAKTYDDAASESSDDDDIDALIEELQSNHGVDDEDSDNDGPVAAGEARPVPEEYLQTDPSYGLTSDEVLKRRKKYGLNQMADEKESLVVKFVMFFVGPIQFVMEAAAILAAGLSDWVDFGVICGLLMLNAGVGFVQEFQAGSIVDELKKTLANTAVVIRDGQLVEIPANEVVPGDILQLEDGTVIPTDGRIVTEDCFLQIDQSAITGESLAVDKHYGDQTFSSSTVKRGEGFMVVTATGDNTFVGRAAALVNKAAGGQGHFTEVLNGIGIILLVLVIATLLLVWTACFYRTNGIVRILRYTLGITIIGVPVGLPAVVTTTMAVGAAYLAKKQAIVQKLSAIESLAGVEILCSDKTGTLTKNKLSLHEPYTVEGVSPDDLMLTACLAASRKKKGLDAIDKAFLKSLKQYPKAKDALTKYKVLEFHPFDPVSKKVTAVVESPEGERIVCVKGAPLFVLKTVEEDHPIPEDVHENYENKVAELASRGFRALGVARKRGEGHWEILGVMPCMDPPRDDTAQTVSEARHLGLRVKMLTGDAVGIAKETCRQLGLGTNIYNAERLGLGGGGDMPGSELADFVENADGFAEVFPQHKYRVVEILQNRGYLVAMTGDGVNDAPSLKKADTGIAVEGATDAARSAADIVFLAPGLSAIIDALKTSRQIFHRMYSYVVYRIALSLHLEIFLGLWIAILDNSLDIDLIVFIAIFADVATLAIAYDNAPYSPKPVKWNLPRLWGMSIILGIVLAIGSWITLTTMFLPKGGIIQNFGAMNGIMFLQISLTENWLIFITRAAGPFWSSIPSWQLAGAVFAVDIIATMFTLFGWWSENWTDIVTVVRVWIWSIGIFCVLGGFYYEMSTSEAFDRLMNGKPMKEKKSTRSVEDFMAAMQRVSTQHEKET</sequence>
<accession>P05030</accession>
<accession>D6VUC9</accession>
<proteinExistence type="evidence at protein level"/>
<gene>
    <name type="primary">PMA1</name>
    <name type="ordered locus">YGL008C</name>
</gene>
<comment type="function">
    <text>The plasma membrane ATPase of plants and fungi is a hydrogen ion pump. The proton gradient it generates drives the active transport of nutrients by H(+)-symport. The resulting external acidification and/or internal alkinization may mediate growth responses.</text>
</comment>
<comment type="catalytic activity">
    <reaction>
        <text>ATP + H2O + H(+)(in) = ADP + phosphate + 2 H(+)(out)</text>
        <dbReference type="Rhea" id="RHEA:20852"/>
        <dbReference type="ChEBI" id="CHEBI:15377"/>
        <dbReference type="ChEBI" id="CHEBI:15378"/>
        <dbReference type="ChEBI" id="CHEBI:30616"/>
        <dbReference type="ChEBI" id="CHEBI:43474"/>
        <dbReference type="ChEBI" id="CHEBI:456216"/>
        <dbReference type="EC" id="7.1.2.1"/>
    </reaction>
</comment>
<comment type="subunit">
    <text evidence="6">Interacts with its cargot receptor EXP1 for its transport within the cell and maturation.</text>
</comment>
<comment type="subcellular location">
    <subcellularLocation>
        <location>Cell membrane</location>
        <topology>Multi-pass membrane protein</topology>
    </subcellularLocation>
</comment>
<comment type="PTM">
    <text>Phosphorylated on multiple Ser and Thr residues.</text>
</comment>
<comment type="miscellaneous">
    <text evidence="9">The prion state [GAR+] is provoked by the interaction of the two proteins STD1 and PMA1. It involves a complex between a small fraction of the cellular complement of PMA1, and STD1, a much lower-abundance protein, and it is transmissible by non-Mendelian, cytoplasmic inheritance. [GAR+] makes cells resistant to the glucose-associated repression of alternative carbon sources. In contrast to other prion forms, [GAR+] cannot be cured by GdnHCl or by inactivation of the molecular chaperone HSP104.</text>
</comment>
<comment type="miscellaneous">
    <text>There are two plasma membrane ATPases in yeast. This is the major isoform.</text>
</comment>
<comment type="miscellaneous">
    <text evidence="5">Present with 1260000 molecules/cell in log phase SD medium.</text>
</comment>
<comment type="similarity">
    <text evidence="8">Belongs to the cation transport ATPase (P-type) (TC 3.A.3) family. Type IIIA subfamily.</text>
</comment>
<reference key="1">
    <citation type="journal article" date="1986" name="Nature">
        <title>Yeast plasma membrane ATPase is essential for growth and has homology with (Na+ + K+), K+- and Ca2+-ATPases.</title>
        <authorList>
            <person name="Serrano R."/>
            <person name="Kielland-Brandt M.C."/>
            <person name="Fink G.R."/>
        </authorList>
    </citation>
    <scope>NUCLEOTIDE SEQUENCE [GENOMIC DNA]</scope>
</reference>
<reference key="2">
    <citation type="journal article" date="1997" name="Nature">
        <title>The nucleotide sequence of Saccharomyces cerevisiae chromosome VII.</title>
        <authorList>
            <person name="Tettelin H."/>
            <person name="Agostoni-Carbone M.L."/>
            <person name="Albermann K."/>
            <person name="Albers M."/>
            <person name="Arroyo J."/>
            <person name="Backes U."/>
            <person name="Barreiros T."/>
            <person name="Bertani I."/>
            <person name="Bjourson A.J."/>
            <person name="Brueckner M."/>
            <person name="Bruschi C.V."/>
            <person name="Carignani G."/>
            <person name="Castagnoli L."/>
            <person name="Cerdan E."/>
            <person name="Clemente M.L."/>
            <person name="Coblenz A."/>
            <person name="Coglievina M."/>
            <person name="Coissac E."/>
            <person name="Defoor E."/>
            <person name="Del Bino S."/>
            <person name="Delius H."/>
            <person name="Delneri D."/>
            <person name="de Wergifosse P."/>
            <person name="Dujon B."/>
            <person name="Durand P."/>
            <person name="Entian K.-D."/>
            <person name="Eraso P."/>
            <person name="Escribano V."/>
            <person name="Fabiani L."/>
            <person name="Fartmann B."/>
            <person name="Feroli F."/>
            <person name="Feuermann M."/>
            <person name="Frontali L."/>
            <person name="Garcia-Gonzalez M."/>
            <person name="Garcia-Saez M.I."/>
            <person name="Goffeau A."/>
            <person name="Guerreiro P."/>
            <person name="Hani J."/>
            <person name="Hansen M."/>
            <person name="Hebling U."/>
            <person name="Hernandez K."/>
            <person name="Heumann K."/>
            <person name="Hilger F."/>
            <person name="Hofmann B."/>
            <person name="Indge K.J."/>
            <person name="James C.M."/>
            <person name="Klima R."/>
            <person name="Koetter P."/>
            <person name="Kramer B."/>
            <person name="Kramer W."/>
            <person name="Lauquin G."/>
            <person name="Leuther H."/>
            <person name="Louis E.J."/>
            <person name="Maillier E."/>
            <person name="Marconi A."/>
            <person name="Martegani E."/>
            <person name="Mazon M.J."/>
            <person name="Mazzoni C."/>
            <person name="McReynolds A.D.K."/>
            <person name="Melchioretto P."/>
            <person name="Mewes H.-W."/>
            <person name="Minenkova O."/>
            <person name="Mueller-Auer S."/>
            <person name="Nawrocki A."/>
            <person name="Netter P."/>
            <person name="Neu R."/>
            <person name="Nombela C."/>
            <person name="Oliver S.G."/>
            <person name="Panzeri L."/>
            <person name="Paoluzi S."/>
            <person name="Plevani P."/>
            <person name="Portetelle D."/>
            <person name="Portillo F."/>
            <person name="Potier S."/>
            <person name="Purnelle B."/>
            <person name="Rieger M."/>
            <person name="Riles L."/>
            <person name="Rinaldi T."/>
            <person name="Robben J."/>
            <person name="Rodrigues-Pousada C."/>
            <person name="Rodriguez-Belmonte E."/>
            <person name="Rodriguez-Torres A.M."/>
            <person name="Rose M."/>
            <person name="Ruzzi M."/>
            <person name="Saliola M."/>
            <person name="Sanchez-Perez M."/>
            <person name="Schaefer B."/>
            <person name="Schaefer M."/>
            <person name="Scharfe M."/>
            <person name="Schmidheini T."/>
            <person name="Schreer A."/>
            <person name="Skala J."/>
            <person name="Souciet J.-L."/>
            <person name="Steensma H.Y."/>
            <person name="Talla E."/>
            <person name="Thierry A."/>
            <person name="Vandenbol M."/>
            <person name="van der Aart Q.J.M."/>
            <person name="Van Dyck L."/>
            <person name="Vanoni M."/>
            <person name="Verhasselt P."/>
            <person name="Voet M."/>
            <person name="Volckaert G."/>
            <person name="Wambutt R."/>
            <person name="Watson M.D."/>
            <person name="Weber N."/>
            <person name="Wedler E."/>
            <person name="Wedler H."/>
            <person name="Wipfli P."/>
            <person name="Wolf K."/>
            <person name="Wright L.F."/>
            <person name="Zaccaria P."/>
            <person name="Zimmermann M."/>
            <person name="Zollner A."/>
            <person name="Kleine K."/>
        </authorList>
    </citation>
    <scope>NUCLEOTIDE SEQUENCE [LARGE SCALE GENOMIC DNA]</scope>
    <source>
        <strain>ATCC 204508 / S288c</strain>
    </source>
</reference>
<reference key="3">
    <citation type="journal article" date="2014" name="G3 (Bethesda)">
        <title>The reference genome sequence of Saccharomyces cerevisiae: Then and now.</title>
        <authorList>
            <person name="Engel S.R."/>
            <person name="Dietrich F.S."/>
            <person name="Fisk D.G."/>
            <person name="Binkley G."/>
            <person name="Balakrishnan R."/>
            <person name="Costanzo M.C."/>
            <person name="Dwight S.S."/>
            <person name="Hitz B.C."/>
            <person name="Karra K."/>
            <person name="Nash R.S."/>
            <person name="Weng S."/>
            <person name="Wong E.D."/>
            <person name="Lloyd P."/>
            <person name="Skrzypek M.S."/>
            <person name="Miyasato S.R."/>
            <person name="Simison M."/>
            <person name="Cherry J.M."/>
        </authorList>
    </citation>
    <scope>GENOME REANNOTATION</scope>
    <source>
        <strain>ATCC 204508 / S288c</strain>
    </source>
</reference>
<reference key="4">
    <citation type="journal article" date="1990" name="J. Biol. Chem.">
        <title>The ATP binding site of the yeast plasma membrane proton-translocating ATPase.</title>
        <authorList>
            <person name="Davis C.B."/>
            <person name="Smith K.E."/>
            <person name="Campbell B.N. Jr."/>
            <person name="Hammes G.G."/>
        </authorList>
    </citation>
    <scope>PROTEIN SEQUENCE OF 556-566</scope>
</reference>
<reference key="5">
    <citation type="journal article" date="1988" name="EMBO J.">
        <title>Dissection of functional domains of the yeast proton-pumping ATPase by directed mutagenesis.</title>
        <authorList>
            <person name="Portillo F."/>
            <person name="Serrano R."/>
        </authorList>
    </citation>
    <scope>MUTAGENESIS OF GLU-129; ASP-200; GLU-233; ARG-271; PRO-335; ASP-378; LYS-474; ASP-534; ASP-560; ASP-638 AND ASN-848</scope>
</reference>
<reference key="6">
    <citation type="journal article" date="2003" name="Nature">
        <title>Global analysis of protein expression in yeast.</title>
        <authorList>
            <person name="Ghaemmaghami S."/>
            <person name="Huh W.-K."/>
            <person name="Bower K."/>
            <person name="Howson R.W."/>
            <person name="Belle A."/>
            <person name="Dephoure N."/>
            <person name="O'Shea E.K."/>
            <person name="Weissman J.S."/>
        </authorList>
    </citation>
    <scope>LEVEL OF PROTEIN EXPRESSION [LARGE SCALE ANALYSIS]</scope>
</reference>
<reference key="7">
    <citation type="journal article" date="2003" name="Proc. Natl. Acad. Sci. U.S.A.">
        <title>A subset of membrane-associated proteins is ubiquitinated in response to mutations in the endoplasmic reticulum degradation machinery.</title>
        <authorList>
            <person name="Hitchcock A.L."/>
            <person name="Auld K."/>
            <person name="Gygi S.P."/>
            <person name="Silver P.A."/>
        </authorList>
    </citation>
    <scope>UBIQUITINATION [LARGE SCALE ANALYSIS] AT LYS-555</scope>
    <scope>IDENTIFICATION BY MASS SPECTROMETRY</scope>
</reference>
<reference key="8">
    <citation type="journal article" date="2006" name="Proc. Natl. Acad. Sci. U.S.A.">
        <title>A global topology map of the Saccharomyces cerevisiae membrane proteome.</title>
        <authorList>
            <person name="Kim H."/>
            <person name="Melen K."/>
            <person name="Oesterberg M."/>
            <person name="von Heijne G."/>
        </authorList>
    </citation>
    <scope>TOPOLOGY [LARGE SCALE ANALYSIS]</scope>
    <source>
        <strain>ATCC 208353 / W303-1A</strain>
    </source>
</reference>
<reference key="9">
    <citation type="journal article" date="2007" name="J. Proteome Res.">
        <title>Large-scale phosphorylation analysis of alpha-factor-arrested Saccharomyces cerevisiae.</title>
        <authorList>
            <person name="Li X."/>
            <person name="Gerber S.A."/>
            <person name="Rudner A.D."/>
            <person name="Beausoleil S.A."/>
            <person name="Haas W."/>
            <person name="Villen J."/>
            <person name="Elias J.E."/>
            <person name="Gygi S.P."/>
        </authorList>
    </citation>
    <scope>PHOSPHORYLATION [LARGE SCALE ANALYSIS] AT SER-911; THR-912 AND THR-918</scope>
    <scope>IDENTIFICATION BY MASS SPECTROMETRY [LARGE SCALE ANALYSIS]</scope>
    <source>
        <strain>ADR376</strain>
    </source>
</reference>
<reference key="10">
    <citation type="journal article" date="2008" name="Mol. Cell. Proteomics">
        <title>A multidimensional chromatography technology for in-depth phosphoproteome analysis.</title>
        <authorList>
            <person name="Albuquerque C.P."/>
            <person name="Smolka M.B."/>
            <person name="Payne S.H."/>
            <person name="Bafna V."/>
            <person name="Eng J."/>
            <person name="Zhou H."/>
        </authorList>
    </citation>
    <scope>PHOSPHORYLATION [LARGE SCALE ANALYSIS] AT SER-61</scope>
    <scope>IDENTIFICATION BY MASS SPECTROMETRY [LARGE SCALE ANALYSIS]</scope>
</reference>
<reference key="11">
    <citation type="journal article" date="2009" name="Genes Dev.">
        <title>A heritable switch in carbon source utilization driven by an unusual yeast prion.</title>
        <authorList>
            <person name="Brown J.C."/>
            <person name="Lindquist S."/>
        </authorList>
    </citation>
    <scope>PRION IDENTIFICATION</scope>
    <scope>INTERACTION WITH STD1</scope>
</reference>
<reference key="12">
    <citation type="journal article" date="2009" name="Science">
        <title>Global analysis of Cdk1 substrate phosphorylation sites provides insights into evolution.</title>
        <authorList>
            <person name="Holt L.J."/>
            <person name="Tuch B.B."/>
            <person name="Villen J."/>
            <person name="Johnson A.D."/>
            <person name="Gygi S.P."/>
            <person name="Morgan D.O."/>
        </authorList>
    </citation>
    <scope>PHOSPHORYLATION [LARGE SCALE ANALYSIS] AT THR-175; SER-911 AND THR-912</scope>
    <scope>IDENTIFICATION BY MASS SPECTROMETRY [LARGE SCALE ANALYSIS]</scope>
</reference>
<reference key="13">
    <citation type="journal article" date="2012" name="Proteomics">
        <title>Sites of ubiquitin attachment in Saccharomyces cerevisiae.</title>
        <authorList>
            <person name="Starita L.M."/>
            <person name="Lo R.S."/>
            <person name="Eng J.K."/>
            <person name="von Haller P.D."/>
            <person name="Fields S."/>
        </authorList>
    </citation>
    <scope>UBIQUITINATION [LARGE SCALE ANALYSIS] AT LYS-252</scope>
    <scope>IDENTIFICATION BY MASS SPECTROMETRY [LARGE SCALE ANALYSIS]</scope>
</reference>
<reference key="14">
    <citation type="journal article" date="2017" name="Traffic">
        <title>Two novel effectors of trafficking and maturation of the yeast plasma membrane H+ -ATPase.</title>
        <authorList>
            <person name="Geva Y."/>
            <person name="Crissman J."/>
            <person name="Arakel E.C."/>
            <person name="Gomez-Navarro N."/>
            <person name="Chuartzman S.G."/>
            <person name="Stahmer K.R."/>
            <person name="Schwappach B."/>
            <person name="Miller E.A."/>
            <person name="Schuldiner M."/>
        </authorList>
    </citation>
    <scope>INTERACTION WITH EXP1</scope>
</reference>